<accession>P28517</accession>
<sequence length="234" mass="26380">MNILKILILLELIYTCVSGLSFTVTSKIYMDVKHQKKPLGRIVFGLFGKRAPKTVTNFRHICLRGINGTTYVGSEFHRVISRFLIQGGDIVNNDGTGSTSIYGDFFQDEALDVEHLRPGYLGMANRGPDTNGCQFYVTTVAAQWLNGKHTVFGKVIEGMDTVYAIEDVKTDTDDHPIDPVIIVNCGEMPTEPYEFYPDDFSILGWIKAAGLPFCSSFIVLMIFHYFFRQLNMYC</sequence>
<dbReference type="EC" id="5.2.1.8"/>
<dbReference type="SMR" id="P28517"/>
<dbReference type="GlyCosmos" id="P28517">
    <property type="glycosylation" value="1 site, No reported glycans"/>
</dbReference>
<dbReference type="GO" id="GO:0005737">
    <property type="term" value="C:cytoplasm"/>
    <property type="evidence" value="ECO:0007669"/>
    <property type="project" value="TreeGrafter"/>
</dbReference>
<dbReference type="GO" id="GO:0043231">
    <property type="term" value="C:intracellular membrane-bounded organelle"/>
    <property type="evidence" value="ECO:0007669"/>
    <property type="project" value="TreeGrafter"/>
</dbReference>
<dbReference type="GO" id="GO:0016020">
    <property type="term" value="C:membrane"/>
    <property type="evidence" value="ECO:0007669"/>
    <property type="project" value="UniProtKB-SubCell"/>
</dbReference>
<dbReference type="GO" id="GO:0016018">
    <property type="term" value="F:cyclosporin A binding"/>
    <property type="evidence" value="ECO:0007669"/>
    <property type="project" value="TreeGrafter"/>
</dbReference>
<dbReference type="GO" id="GO:0003755">
    <property type="term" value="F:peptidyl-prolyl cis-trans isomerase activity"/>
    <property type="evidence" value="ECO:0007669"/>
    <property type="project" value="UniProtKB-KW"/>
</dbReference>
<dbReference type="GO" id="GO:0006457">
    <property type="term" value="P:protein folding"/>
    <property type="evidence" value="ECO:0007669"/>
    <property type="project" value="InterPro"/>
</dbReference>
<dbReference type="GO" id="GO:0007601">
    <property type="term" value="P:visual perception"/>
    <property type="evidence" value="ECO:0007669"/>
    <property type="project" value="UniProtKB-KW"/>
</dbReference>
<dbReference type="FunFam" id="2.40.100.10:FF:000019">
    <property type="entry name" value="Peptidyl-prolyl cis-trans isomerase"/>
    <property type="match status" value="1"/>
</dbReference>
<dbReference type="Gene3D" id="2.40.100.10">
    <property type="entry name" value="Cyclophilin-like"/>
    <property type="match status" value="1"/>
</dbReference>
<dbReference type="InterPro" id="IPR029000">
    <property type="entry name" value="Cyclophilin-like_dom_sf"/>
</dbReference>
<dbReference type="InterPro" id="IPR020892">
    <property type="entry name" value="Cyclophilin-type_PPIase_CS"/>
</dbReference>
<dbReference type="InterPro" id="IPR002130">
    <property type="entry name" value="Cyclophilin-type_PPIase_dom"/>
</dbReference>
<dbReference type="PANTHER" id="PTHR11071">
    <property type="entry name" value="PEPTIDYL-PROLYL CIS-TRANS ISOMERASE"/>
    <property type="match status" value="1"/>
</dbReference>
<dbReference type="PANTHER" id="PTHR11071:SF478">
    <property type="entry name" value="PEPTIDYL-PROLYL CIS-TRANS ISOMERASE, RHODOPSIN-SPECIFIC ISOZYME"/>
    <property type="match status" value="1"/>
</dbReference>
<dbReference type="Pfam" id="PF00160">
    <property type="entry name" value="Pro_isomerase"/>
    <property type="match status" value="1"/>
</dbReference>
<dbReference type="PRINTS" id="PR00153">
    <property type="entry name" value="CSAPPISMRASE"/>
</dbReference>
<dbReference type="SUPFAM" id="SSF50891">
    <property type="entry name" value="Cyclophilin-like"/>
    <property type="match status" value="1"/>
</dbReference>
<dbReference type="PROSITE" id="PS00170">
    <property type="entry name" value="CSA_PPIASE_1"/>
    <property type="match status" value="1"/>
</dbReference>
<dbReference type="PROSITE" id="PS50072">
    <property type="entry name" value="CSA_PPIASE_2"/>
    <property type="match status" value="1"/>
</dbReference>
<comment type="function">
    <text>PPIases accelerate the folding of proteins. It catalyzes the cis-trans isomerization of proline imidic peptide bonds in oligopeptides. Acts on the folding of rhodopsin RH1 and RH2 (but not RH3) and is required for visual transduction.</text>
</comment>
<comment type="catalytic activity">
    <reaction>
        <text>[protein]-peptidylproline (omega=180) = [protein]-peptidylproline (omega=0)</text>
        <dbReference type="Rhea" id="RHEA:16237"/>
        <dbReference type="Rhea" id="RHEA-COMP:10747"/>
        <dbReference type="Rhea" id="RHEA-COMP:10748"/>
        <dbReference type="ChEBI" id="CHEBI:83833"/>
        <dbReference type="ChEBI" id="CHEBI:83834"/>
        <dbReference type="EC" id="5.2.1.8"/>
    </reaction>
</comment>
<comment type="subcellular location">
    <subcellularLocation>
        <location>Membrane</location>
        <topology>Single-pass membrane protein</topology>
    </subcellularLocation>
</comment>
<comment type="tissue specificity">
    <text>Expressed specifically in photoreceptor cells.</text>
</comment>
<comment type="similarity">
    <text evidence="3">Belongs to the cyclophilin-type PPIase family.</text>
</comment>
<organism>
    <name type="scientific">Calliphora vicina</name>
    <name type="common">Blue blowfly</name>
    <name type="synonym">Calliphora erythrocephala</name>
    <dbReference type="NCBI Taxonomy" id="7373"/>
    <lineage>
        <taxon>Eukaryota</taxon>
        <taxon>Metazoa</taxon>
        <taxon>Ecdysozoa</taxon>
        <taxon>Arthropoda</taxon>
        <taxon>Hexapoda</taxon>
        <taxon>Insecta</taxon>
        <taxon>Pterygota</taxon>
        <taxon>Neoptera</taxon>
        <taxon>Endopterygota</taxon>
        <taxon>Diptera</taxon>
        <taxon>Brachycera</taxon>
        <taxon>Muscomorpha</taxon>
        <taxon>Oestroidea</taxon>
        <taxon>Calliphoridae</taxon>
        <taxon>Calliphorinae</taxon>
        <taxon>Calliphora</taxon>
    </lineage>
</organism>
<keyword id="KW-0325">Glycoprotein</keyword>
<keyword id="KW-0413">Isomerase</keyword>
<keyword id="KW-0472">Membrane</keyword>
<keyword id="KW-0697">Rotamase</keyword>
<keyword id="KW-0716">Sensory transduction</keyword>
<keyword id="KW-0732">Signal</keyword>
<keyword id="KW-0812">Transmembrane</keyword>
<keyword id="KW-1133">Transmembrane helix</keyword>
<keyword id="KW-0844">Vision</keyword>
<gene>
    <name type="primary">NINAA</name>
</gene>
<feature type="signal peptide" evidence="1">
    <location>
        <begin position="1"/>
        <end position="19"/>
    </location>
</feature>
<feature type="chain" id="PRO_0000025492" description="Peptidyl-prolyl cis-trans isomerase, rhodopsin-specific isozyme">
    <location>
        <begin position="20"/>
        <end position="234"/>
    </location>
</feature>
<feature type="transmembrane region" description="Helical" evidence="1">
    <location>
        <begin position="202"/>
        <end position="222"/>
    </location>
</feature>
<feature type="domain" description="PPIase cyclophilin-type" evidence="2">
    <location>
        <begin position="29"/>
        <end position="187"/>
    </location>
</feature>
<feature type="glycosylation site" description="N-linked (GlcNAc...) asparagine" evidence="1">
    <location>
        <position position="67"/>
    </location>
</feature>
<evidence type="ECO:0000255" key="1"/>
<evidence type="ECO:0000255" key="2">
    <source>
        <dbReference type="PROSITE-ProRule" id="PRU00156"/>
    </source>
</evidence>
<evidence type="ECO:0000305" key="3"/>
<protein>
    <recommendedName>
        <fullName>Peptidyl-prolyl cis-trans isomerase, rhodopsin-specific isozyme</fullName>
        <shortName>PPIase</shortName>
        <ecNumber>5.2.1.8</ecNumber>
    </recommendedName>
    <alternativeName>
        <fullName>Rotamase</fullName>
    </alternativeName>
</protein>
<name>CYPR_CALVI</name>
<reference key="1">
    <citation type="journal article" date="1992" name="J. Biol. Chem.">
        <title>Genetic dissection of cyclophilin function. Saturation mutagenesis of the Drosophila cyclophilin homolog ninaA.</title>
        <authorList>
            <person name="Ondek B."/>
            <person name="Hardy R.W."/>
            <person name="Baker E.K."/>
            <person name="Stamnes M.A."/>
            <person name="Shieh B.-H."/>
            <person name="Zuker C.S."/>
        </authorList>
    </citation>
    <scope>NUCLEOTIDE SEQUENCE</scope>
</reference>
<proteinExistence type="evidence at transcript level"/>